<proteinExistence type="inferred from homology"/>
<protein>
    <recommendedName>
        <fullName evidence="1">Ribosomal RNA small subunit methyltransferase H</fullName>
        <ecNumber evidence="1">2.1.1.199</ecNumber>
    </recommendedName>
    <alternativeName>
        <fullName evidence="1">16S rRNA m(4)C1402 methyltransferase</fullName>
    </alternativeName>
    <alternativeName>
        <fullName evidence="1">rRNA (cytosine-N(4)-)-methyltransferase RsmH</fullName>
    </alternativeName>
</protein>
<accession>Q9Z8C2</accession>
<reference key="1">
    <citation type="journal article" date="1999" name="Nat. Genet.">
        <title>Comparative genomes of Chlamydia pneumoniae and C. trachomatis.</title>
        <authorList>
            <person name="Kalman S."/>
            <person name="Mitchell W.P."/>
            <person name="Marathe R."/>
            <person name="Lammel C.J."/>
            <person name="Fan J."/>
            <person name="Hyman R.W."/>
            <person name="Olinger L."/>
            <person name="Grimwood J."/>
            <person name="Davis R.W."/>
            <person name="Stephens R.S."/>
        </authorList>
    </citation>
    <scope>NUCLEOTIDE SEQUENCE [LARGE SCALE GENOMIC DNA]</scope>
    <source>
        <strain>CWL029</strain>
    </source>
</reference>
<reference key="2">
    <citation type="journal article" date="2000" name="Nucleic Acids Res.">
        <title>Genome sequences of Chlamydia trachomatis MoPn and Chlamydia pneumoniae AR39.</title>
        <authorList>
            <person name="Read T.D."/>
            <person name="Brunham R.C."/>
            <person name="Shen C."/>
            <person name="Gill S.R."/>
            <person name="Heidelberg J.F."/>
            <person name="White O."/>
            <person name="Hickey E.K."/>
            <person name="Peterson J.D."/>
            <person name="Utterback T.R."/>
            <person name="Berry K.J."/>
            <person name="Bass S."/>
            <person name="Linher K.D."/>
            <person name="Weidman J.F."/>
            <person name="Khouri H.M."/>
            <person name="Craven B."/>
            <person name="Bowman C."/>
            <person name="Dodson R.J."/>
            <person name="Gwinn M.L."/>
            <person name="Nelson W.C."/>
            <person name="DeBoy R.T."/>
            <person name="Kolonay J.F."/>
            <person name="McClarty G."/>
            <person name="Salzberg S.L."/>
            <person name="Eisen J.A."/>
            <person name="Fraser C.M."/>
        </authorList>
    </citation>
    <scope>NUCLEOTIDE SEQUENCE [LARGE SCALE GENOMIC DNA]</scope>
    <source>
        <strain>AR39</strain>
    </source>
</reference>
<reference key="3">
    <citation type="journal article" date="2000" name="Nucleic Acids Res.">
        <title>Comparison of whole genome sequences of Chlamydia pneumoniae J138 from Japan and CWL029 from USA.</title>
        <authorList>
            <person name="Shirai M."/>
            <person name="Hirakawa H."/>
            <person name="Kimoto M."/>
            <person name="Tabuchi M."/>
            <person name="Kishi F."/>
            <person name="Ouchi K."/>
            <person name="Shiba T."/>
            <person name="Ishii K."/>
            <person name="Hattori M."/>
            <person name="Kuhara S."/>
            <person name="Nakazawa T."/>
        </authorList>
    </citation>
    <scope>NUCLEOTIDE SEQUENCE [LARGE SCALE GENOMIC DNA]</scope>
    <source>
        <strain>J138</strain>
    </source>
</reference>
<reference key="4">
    <citation type="submission" date="2002-05" db="EMBL/GenBank/DDBJ databases">
        <title>The genome sequence of Chlamydia pneumoniae TW183 and comparison with other Chlamydia strains based on whole genome sequence analysis.</title>
        <authorList>
            <person name="Geng M.M."/>
            <person name="Schuhmacher A."/>
            <person name="Muehldorfer I."/>
            <person name="Bensch K.W."/>
            <person name="Schaefer K.P."/>
            <person name="Schneider S."/>
            <person name="Pohl T."/>
            <person name="Essig A."/>
            <person name="Marre R."/>
            <person name="Melchers K."/>
        </authorList>
    </citation>
    <scope>NUCLEOTIDE SEQUENCE [LARGE SCALE GENOMIC DNA]</scope>
    <source>
        <strain>TW-183</strain>
    </source>
</reference>
<feature type="chain" id="PRO_0000108606" description="Ribosomal RNA small subunit methyltransferase H">
    <location>
        <begin position="1"/>
        <end position="297"/>
    </location>
</feature>
<feature type="binding site" evidence="1">
    <location>
        <begin position="34"/>
        <end position="36"/>
    </location>
    <ligand>
        <name>S-adenosyl-L-methionine</name>
        <dbReference type="ChEBI" id="CHEBI:59789"/>
    </ligand>
</feature>
<feature type="binding site" evidence="1">
    <location>
        <position position="54"/>
    </location>
    <ligand>
        <name>S-adenosyl-L-methionine</name>
        <dbReference type="ChEBI" id="CHEBI:59789"/>
    </ligand>
</feature>
<feature type="binding site" evidence="1">
    <location>
        <position position="81"/>
    </location>
    <ligand>
        <name>S-adenosyl-L-methionine</name>
        <dbReference type="ChEBI" id="CHEBI:59789"/>
    </ligand>
</feature>
<feature type="binding site" evidence="1">
    <location>
        <position position="99"/>
    </location>
    <ligand>
        <name>S-adenosyl-L-methionine</name>
        <dbReference type="ChEBI" id="CHEBI:59789"/>
    </ligand>
</feature>
<feature type="binding site" evidence="1">
    <location>
        <position position="106"/>
    </location>
    <ligand>
        <name>S-adenosyl-L-methionine</name>
        <dbReference type="ChEBI" id="CHEBI:59789"/>
    </ligand>
</feature>
<name>RSMH_CHLPN</name>
<comment type="function">
    <text evidence="1">Specifically methylates the N4 position of cytidine in position 1402 (C1402) of 16S rRNA.</text>
</comment>
<comment type="catalytic activity">
    <reaction evidence="1">
        <text>cytidine(1402) in 16S rRNA + S-adenosyl-L-methionine = N(4)-methylcytidine(1402) in 16S rRNA + S-adenosyl-L-homocysteine + H(+)</text>
        <dbReference type="Rhea" id="RHEA:42928"/>
        <dbReference type="Rhea" id="RHEA-COMP:10286"/>
        <dbReference type="Rhea" id="RHEA-COMP:10287"/>
        <dbReference type="ChEBI" id="CHEBI:15378"/>
        <dbReference type="ChEBI" id="CHEBI:57856"/>
        <dbReference type="ChEBI" id="CHEBI:59789"/>
        <dbReference type="ChEBI" id="CHEBI:74506"/>
        <dbReference type="ChEBI" id="CHEBI:82748"/>
        <dbReference type="EC" id="2.1.1.199"/>
    </reaction>
</comment>
<comment type="subcellular location">
    <subcellularLocation>
        <location evidence="1">Cytoplasm</location>
    </subcellularLocation>
</comment>
<comment type="similarity">
    <text evidence="1">Belongs to the methyltransferase superfamily. RsmH family.</text>
</comment>
<sequence>MSERAHIPVLVEECLALFAQRPPQTFRDVTLGAGGHAYAFLEAYPSLTCYDGSDRDLQALAIAEKRLETFQDRVSFSHASFEDLANQPTPRLYDGVLADLGVSSMQLDTLSRGFSFQGEKEELDMRMDQTQELSASDVLNSLKEEELGRIFREYGEEPQWKSAAKAVVHFRKHKKILSIQDVKEALLGVFPHYRFHRKIHPLTLIFQALRVYVNGEDRQLKSLLTSAISWLAPQGRLVIISFCSSEDRPVKWFFKEAEASGLGKVITKKVIQPTYQEVRRNPRSRSAKLRCFEKASQ</sequence>
<organism>
    <name type="scientific">Chlamydia pneumoniae</name>
    <name type="common">Chlamydophila pneumoniae</name>
    <dbReference type="NCBI Taxonomy" id="83558"/>
    <lineage>
        <taxon>Bacteria</taxon>
        <taxon>Pseudomonadati</taxon>
        <taxon>Chlamydiota</taxon>
        <taxon>Chlamydiia</taxon>
        <taxon>Chlamydiales</taxon>
        <taxon>Chlamydiaceae</taxon>
        <taxon>Chlamydia/Chlamydophila group</taxon>
        <taxon>Chlamydia</taxon>
    </lineage>
</organism>
<dbReference type="EC" id="2.1.1.199" evidence="1"/>
<dbReference type="EMBL" id="AE001363">
    <property type="protein sequence ID" value="AAD18565.1"/>
    <property type="molecule type" value="Genomic_DNA"/>
</dbReference>
<dbReference type="EMBL" id="AE002161">
    <property type="protein sequence ID" value="AAF38187.1"/>
    <property type="molecule type" value="Genomic_DNA"/>
</dbReference>
<dbReference type="EMBL" id="BA000008">
    <property type="protein sequence ID" value="BAA98629.1"/>
    <property type="molecule type" value="Genomic_DNA"/>
</dbReference>
<dbReference type="EMBL" id="AE009440">
    <property type="protein sequence ID" value="AAP98368.1"/>
    <property type="molecule type" value="Genomic_DNA"/>
</dbReference>
<dbReference type="PIR" id="C86543">
    <property type="entry name" value="C86543"/>
</dbReference>
<dbReference type="PIR" id="G72080">
    <property type="entry name" value="G72080"/>
</dbReference>
<dbReference type="RefSeq" id="NP_224621.1">
    <property type="nucleotide sequence ID" value="NC_000922.1"/>
</dbReference>
<dbReference type="RefSeq" id="WP_010883064.1">
    <property type="nucleotide sequence ID" value="NZ_LN847257.1"/>
</dbReference>
<dbReference type="SMR" id="Q9Z8C2"/>
<dbReference type="STRING" id="406984.CPK_ORF00930"/>
<dbReference type="GeneID" id="45050468"/>
<dbReference type="KEGG" id="cpa:CP_0333"/>
<dbReference type="KEGG" id="cpj:yabC_2"/>
<dbReference type="KEGG" id="cpn:CPn_0421"/>
<dbReference type="KEGG" id="cpt:CpB0437"/>
<dbReference type="PATRIC" id="fig|115713.3.peg.465"/>
<dbReference type="eggNOG" id="COG0275">
    <property type="taxonomic scope" value="Bacteria"/>
</dbReference>
<dbReference type="HOGENOM" id="CLU_038422_3_0_0"/>
<dbReference type="OMA" id="NPAKRTF"/>
<dbReference type="OrthoDB" id="9806637at2"/>
<dbReference type="Proteomes" id="UP000000583">
    <property type="component" value="Chromosome"/>
</dbReference>
<dbReference type="Proteomes" id="UP000000801">
    <property type="component" value="Chromosome"/>
</dbReference>
<dbReference type="GO" id="GO:0005737">
    <property type="term" value="C:cytoplasm"/>
    <property type="evidence" value="ECO:0007669"/>
    <property type="project" value="UniProtKB-SubCell"/>
</dbReference>
<dbReference type="GO" id="GO:0071424">
    <property type="term" value="F:rRNA (cytosine-N4-)-methyltransferase activity"/>
    <property type="evidence" value="ECO:0007669"/>
    <property type="project" value="UniProtKB-UniRule"/>
</dbReference>
<dbReference type="GO" id="GO:0070475">
    <property type="term" value="P:rRNA base methylation"/>
    <property type="evidence" value="ECO:0007669"/>
    <property type="project" value="UniProtKB-UniRule"/>
</dbReference>
<dbReference type="Gene3D" id="1.10.150.170">
    <property type="entry name" value="Putative methyltransferase TM0872, insert domain"/>
    <property type="match status" value="1"/>
</dbReference>
<dbReference type="Gene3D" id="3.40.50.150">
    <property type="entry name" value="Vaccinia Virus protein VP39"/>
    <property type="match status" value="1"/>
</dbReference>
<dbReference type="HAMAP" id="MF_01007">
    <property type="entry name" value="16SrRNA_methyltr_H"/>
    <property type="match status" value="1"/>
</dbReference>
<dbReference type="InterPro" id="IPR002903">
    <property type="entry name" value="RsmH"/>
</dbReference>
<dbReference type="InterPro" id="IPR023397">
    <property type="entry name" value="SAM-dep_MeTrfase_MraW_recog"/>
</dbReference>
<dbReference type="InterPro" id="IPR029063">
    <property type="entry name" value="SAM-dependent_MTases_sf"/>
</dbReference>
<dbReference type="NCBIfam" id="TIGR00006">
    <property type="entry name" value="16S rRNA (cytosine(1402)-N(4))-methyltransferase RsmH"/>
    <property type="match status" value="1"/>
</dbReference>
<dbReference type="PANTHER" id="PTHR11265:SF0">
    <property type="entry name" value="12S RRNA N4-METHYLCYTIDINE METHYLTRANSFERASE"/>
    <property type="match status" value="1"/>
</dbReference>
<dbReference type="PANTHER" id="PTHR11265">
    <property type="entry name" value="S-ADENOSYL-METHYLTRANSFERASE MRAW"/>
    <property type="match status" value="1"/>
</dbReference>
<dbReference type="Pfam" id="PF01795">
    <property type="entry name" value="Methyltransf_5"/>
    <property type="match status" value="1"/>
</dbReference>
<dbReference type="PIRSF" id="PIRSF004486">
    <property type="entry name" value="MraW"/>
    <property type="match status" value="1"/>
</dbReference>
<dbReference type="SUPFAM" id="SSF81799">
    <property type="entry name" value="Putative methyltransferase TM0872, insert domain"/>
    <property type="match status" value="1"/>
</dbReference>
<dbReference type="SUPFAM" id="SSF53335">
    <property type="entry name" value="S-adenosyl-L-methionine-dependent methyltransferases"/>
    <property type="match status" value="1"/>
</dbReference>
<keyword id="KW-0963">Cytoplasm</keyword>
<keyword id="KW-0489">Methyltransferase</keyword>
<keyword id="KW-0698">rRNA processing</keyword>
<keyword id="KW-0949">S-adenosyl-L-methionine</keyword>
<keyword id="KW-0808">Transferase</keyword>
<gene>
    <name evidence="1" type="primary">rsmH</name>
    <name type="synonym">mraW</name>
    <name type="ordered locus">CPn_0421</name>
    <name type="ordered locus">CP_0333</name>
    <name type="ordered locus">CpB0437</name>
</gene>
<evidence type="ECO:0000255" key="1">
    <source>
        <dbReference type="HAMAP-Rule" id="MF_01007"/>
    </source>
</evidence>